<keyword id="KW-0012">Acyltransferase</keyword>
<keyword id="KW-0284">Flavonoid biosynthesis</keyword>
<keyword id="KW-0808">Transferase</keyword>
<accession>P16107</accession>
<comment type="function">
    <text>The primary product of this enzyme is 4,2',4',6'-tetrahydroxychalcone (also termed naringenin-chalcone or chalcone) which can under specific conditions spontaneously isomerize into naringenin.</text>
</comment>
<comment type="catalytic activity">
    <reaction evidence="1">
        <text>(E)-4-coumaroyl-CoA + 3 malonyl-CoA + 3 H(+) = 2',4,4',6'-tetrahydroxychalcone + 3 CO2 + 4 CoA</text>
        <dbReference type="Rhea" id="RHEA:11128"/>
        <dbReference type="ChEBI" id="CHEBI:15378"/>
        <dbReference type="ChEBI" id="CHEBI:15413"/>
        <dbReference type="ChEBI" id="CHEBI:16526"/>
        <dbReference type="ChEBI" id="CHEBI:57287"/>
        <dbReference type="ChEBI" id="CHEBI:57384"/>
        <dbReference type="ChEBI" id="CHEBI:85008"/>
        <dbReference type="EC" id="2.3.1.74"/>
    </reaction>
</comment>
<comment type="pathway">
    <text>Secondary metabolite biosynthesis; flavonoid biosynthesis.</text>
</comment>
<comment type="similarity">
    <text evidence="2">Belongs to the thiolase-like superfamily. Chalcone/stilbene synthases family.</text>
</comment>
<dbReference type="EC" id="2.3.1.74"/>
<dbReference type="EMBL" id="V01538">
    <property type="protein sequence ID" value="CAA24779.1"/>
    <property type="molecule type" value="Genomic_DNA"/>
</dbReference>
<dbReference type="PIR" id="S42523">
    <property type="entry name" value="S42523"/>
</dbReference>
<dbReference type="SMR" id="P16107"/>
<dbReference type="UniPathway" id="UPA00154"/>
<dbReference type="GO" id="GO:0016210">
    <property type="term" value="F:naringenin-chalcone synthase activity"/>
    <property type="evidence" value="ECO:0007669"/>
    <property type="project" value="UniProtKB-EC"/>
</dbReference>
<dbReference type="GO" id="GO:0009813">
    <property type="term" value="P:flavonoid biosynthetic process"/>
    <property type="evidence" value="ECO:0007669"/>
    <property type="project" value="UniProtKB-UniPathway"/>
</dbReference>
<dbReference type="GO" id="GO:0030639">
    <property type="term" value="P:polyketide biosynthetic process"/>
    <property type="evidence" value="ECO:0007669"/>
    <property type="project" value="TreeGrafter"/>
</dbReference>
<dbReference type="CDD" id="cd00831">
    <property type="entry name" value="CHS_like"/>
    <property type="match status" value="1"/>
</dbReference>
<dbReference type="FunFam" id="3.40.47.10:FF:000014">
    <property type="entry name" value="Chalcone synthase 1"/>
    <property type="match status" value="1"/>
</dbReference>
<dbReference type="FunFam" id="3.40.47.10:FF:000025">
    <property type="entry name" value="Chalcone synthase 2"/>
    <property type="match status" value="1"/>
</dbReference>
<dbReference type="Gene3D" id="3.40.47.10">
    <property type="match status" value="2"/>
</dbReference>
<dbReference type="InterPro" id="IPR012328">
    <property type="entry name" value="Chalcone/stilbene_synt_C"/>
</dbReference>
<dbReference type="InterPro" id="IPR001099">
    <property type="entry name" value="Chalcone/stilbene_synt_N"/>
</dbReference>
<dbReference type="InterPro" id="IPR018088">
    <property type="entry name" value="Chalcone/stilbene_synthase_AS"/>
</dbReference>
<dbReference type="InterPro" id="IPR011141">
    <property type="entry name" value="Polyketide_synthase_type-III"/>
</dbReference>
<dbReference type="InterPro" id="IPR016039">
    <property type="entry name" value="Thiolase-like"/>
</dbReference>
<dbReference type="PANTHER" id="PTHR11877:SF14">
    <property type="entry name" value="CHALCONE SYNTHASE"/>
    <property type="match status" value="1"/>
</dbReference>
<dbReference type="PANTHER" id="PTHR11877">
    <property type="entry name" value="HYDROXYMETHYLGLUTARYL-COA SYNTHASE"/>
    <property type="match status" value="1"/>
</dbReference>
<dbReference type="Pfam" id="PF02797">
    <property type="entry name" value="Chal_sti_synt_C"/>
    <property type="match status" value="1"/>
</dbReference>
<dbReference type="Pfam" id="PF00195">
    <property type="entry name" value="Chal_sti_synt_N"/>
    <property type="match status" value="1"/>
</dbReference>
<dbReference type="PIRSF" id="PIRSF000451">
    <property type="entry name" value="PKS_III"/>
    <property type="match status" value="1"/>
</dbReference>
<dbReference type="SUPFAM" id="SSF53901">
    <property type="entry name" value="Thiolase-like"/>
    <property type="match status" value="2"/>
</dbReference>
<dbReference type="PROSITE" id="PS00441">
    <property type="entry name" value="CHALCONE_SYNTH"/>
    <property type="match status" value="1"/>
</dbReference>
<evidence type="ECO:0000255" key="1">
    <source>
        <dbReference type="PROSITE-ProRule" id="PRU10023"/>
    </source>
</evidence>
<evidence type="ECO:0000305" key="2"/>
<organism>
    <name type="scientific">Petroselinum crispum</name>
    <name type="common">Parsley</name>
    <name type="synonym">Petroselinum hortense</name>
    <dbReference type="NCBI Taxonomy" id="4043"/>
    <lineage>
        <taxon>Eukaryota</taxon>
        <taxon>Viridiplantae</taxon>
        <taxon>Streptophyta</taxon>
        <taxon>Embryophyta</taxon>
        <taxon>Tracheophyta</taxon>
        <taxon>Spermatophyta</taxon>
        <taxon>Magnoliopsida</taxon>
        <taxon>eudicotyledons</taxon>
        <taxon>Gunneridae</taxon>
        <taxon>Pentapetalae</taxon>
        <taxon>asterids</taxon>
        <taxon>campanulids</taxon>
        <taxon>Apiales</taxon>
        <taxon>Apiaceae</taxon>
        <taxon>Apioideae</taxon>
        <taxon>apioid superclade</taxon>
        <taxon>Apieae</taxon>
        <taxon>Petroselinum</taxon>
    </lineage>
</organism>
<protein>
    <recommendedName>
        <fullName>Chalcone synthase</fullName>
        <ecNumber>2.3.1.74</ecNumber>
    </recommendedName>
    <alternativeName>
        <fullName>Naringenin-chalcone synthase</fullName>
    </alternativeName>
</protein>
<reference key="1">
    <citation type="journal article" date="1983" name="EMBO J.">
        <title>Coding and 3' non-coding nucleotide sequence of chalcone synthase mRNA and assignment of amino acid sequence of the enzyme.</title>
        <authorList>
            <person name="Reimold U."/>
            <person name="Kroeger M."/>
            <person name="Kreuzaler F."/>
            <person name="Hahlbrock K."/>
        </authorList>
    </citation>
    <scope>NUCLEOTIDE SEQUENCE [GENOMIC DNA]</scope>
</reference>
<sequence length="398" mass="43735">MANHHNAEIEEIRNRQRAQGPANILAIGTATPSNCVYQADYPDYYFRITNSEHMTDLKLKFKRMCEKSMIRKRYMHITEEYLKENPNVCAYEAPSLDARQDLVVVEVPRLGKEAASKAIKEWGQPKSKITHLIFCTTSGVDMPGADYQLTKLLGLRPSVKRFMMYQQGCFAGGTVLRLAKDLAENNAGARVLVVCSEITAVTFRGPSDSHLDSLVGQALFGDGAAAVILGSDPDLSVERPLFQLISAAQTILPDSDGAIDGHLREVGLTFHLLKDVPGLISKNIEKSLKEAFGPIGISDWNSLFWIAHPGGPAILDQVELKLGLKEEKMRATRQVLSDYGNMSSACVLFILDEMRKKSIEEGKATTGEGLDWGVLFGFGPGLTVETVVLHSVPATFTH</sequence>
<gene>
    <name type="primary">CHS</name>
</gene>
<feature type="chain" id="PRO_0000216028" description="Chalcone synthase">
    <location>
        <begin position="1"/>
        <end position="398"/>
    </location>
</feature>
<feature type="active site" evidence="1">
    <location>
        <position position="169"/>
    </location>
</feature>
<proteinExistence type="inferred from homology"/>
<name>CHSY_PETCR</name>